<name>THS7A_HUMAN</name>
<sequence length="1657" mass="185363">MGLQARRWASGSRGAAGPRRGVLQLLPLPLPLPLLLLLLLRPGAGRAAAQGEAEAPTLYLWKTGPWGRCMGDECGPGGIQTRAVWCAHVEGWTTLHTNCKQAERPNNQQNCFKVCDWHKELYDWRLGPWNQCQPVISKSLEKPLECIKGEEGIQVREIACIQKDKDIPAEDIICEYFEPKPLLEQACLIPCQQDCIVSEFSAWSECSKTCGSGLQHRTRHVVAPPQFGGSGCPNLTEFQVCQSSPCEAEELRYSLHVGPWSTCSMPHSRQVRQARRRGKNKEREKDRSKGVKDPEARELIKKKRNRNRQNRQENKYWDIQIGYQTREVMCINKTGKAADLSFCQQEKLPMTFQSCVITKECQVSEWSEWSPCSKTCHDMVSPAGTRVRTRTIRQFPIGSEKECPEFEEKEPCLSQGDGVVPCATYGWRTTEWTECRVDPLLSQQDKRRGNQTALCGGGIQTREVYCVQANENLLSQLSTHKNKEASKPMDLKLCTGPIPNTTQLCHIPCPTECEVSPWSAWGPCTYENCNDQQGKKGFKLRKRRITNEPTGGSGVTGNCPHLLEAIPCEEPACYDWKAVRLGNCEPDNGKECGPGTQVQEVVCINSDGEEVDRQLCRDAIFPIPVACDAPCPKDCVLSTWSTWSSCSHTCSGKTTEGKQIRARSILAYAGEEGGIRCPNSSALQEVRSCNEHPCTVYHWQTGPWGQCIEDTSVSSFNTTTTWNGEASCSVGMQTRKVICVRVNVGQVGPKKCPESLRPETVRPCLLPCKKDCIVTPYSDWTSCPSSCKEGDSSIRKQSRHRVIIQLPANGGRDCTDPLYEEKACEAPQACQSYRWKTHKWRRCQLVPWSVQQDSPGAQEGCGPGRQARAITCRKQDGGQAGIHECLQYAGPVPALTQACQIPCQDDCQLTSWSKFSSCNGDCGAVRTRKRTLVGKSKKKEKCKNSHLYPLIETQYCPCDKYNAQPVGNWSDCILPEGKVEVLLGMKVQGDIKECGQGYRYQAMACYDQNGRLVETSRCNSHGYIEEACIIPCPSDCKLSEWSNWSRCSKSCGSGVKVRSKWLREKPYNGGRPCPKLDHVNQAQVYEVVPCHSDCNQYLWVTEPWSICKVTFVNMRENCGEGVQTRKVRCMQNTADGPSEHVEDYLCDPEEMPLGSRVCKLPCPEDCVISEWGPWTQCVLPCNQSSFRQRSADPIRQPADEGRSCPNAVEKEPCNLNKNCYHYDYNVTDWSTCQLSEKAVCGNGIKTRMLDCVRSDGKSVDLKYCEALGLEKNWQMNTSCMVECPVNCQLSDWSPWSECSQTCGLTGKMIRRRTVTQPFQGDGRPCPSLMDQSKPCPVKPCYRWQYGQWSPCQVQEAQCGEGTRTRNISCVVSDGSADDFSKVVDEEFCADIELIIDGNKNMVLEESCSQPCPGDCYLKDWSSWSLCQLTCVNGEDLGFGGIQVRSRPVIIQELENQHLCPEQMLETKSCYDGQCYEYKWMASAWKGSSRTVWCQRSDGINVTGGCLVMSQPDADRSCNPPCSQPHSYCSETKTCHCEEGYTEVMSSNSTLEQCTLIPVVVLPTMEDKRGDVKTSRAVHPTQPSSNPAGRGRTWFLQPFGPDGRLKTWVYGVAAGAFVLLIFIVSMIYLACKKPKKPQRRQNNRLKPLTLAYDGDADM</sequence>
<comment type="function">
    <molecule>Thrombospondin type-1 domain-containing protein 7A</molecule>
    <text evidence="7">Plays a role in actin cytoskeleton rearrangement.</text>
</comment>
<comment type="function">
    <molecule>Thrombospondin type-1 domain-containing protein 7A, soluble form</molecule>
    <text evidence="5">The soluble form promotes endothelial cell migration and filopodia formation during sprouting angiogenesis via a FAK-dependent mechanism.</text>
</comment>
<comment type="interaction">
    <interactant intactId="EBI-310962">
        <id>Q9UPZ6</id>
    </interactant>
    <interactant intactId="EBI-13059134">
        <id>Q13520</id>
        <label>AQP6</label>
    </interactant>
    <organismsDiffer>false</organismsDiffer>
    <experiments>3</experiments>
</comment>
<comment type="interaction">
    <interactant intactId="EBI-310962">
        <id>Q9UPZ6</id>
    </interactant>
    <interactant intactId="EBI-11343438">
        <id>Q3SXY8</id>
        <label>ARL13B</label>
    </interactant>
    <organismsDiffer>false</organismsDiffer>
    <experiments>3</experiments>
</comment>
<comment type="interaction">
    <interactant intactId="EBI-310962">
        <id>Q9UPZ6</id>
    </interactant>
    <interactant intactId="EBI-3906571">
        <id>P20138</id>
        <label>CD33</label>
    </interactant>
    <organismsDiffer>false</organismsDiffer>
    <experiments>3</experiments>
</comment>
<comment type="interaction">
    <interactant intactId="EBI-310962">
        <id>Q9UPZ6</id>
    </interactant>
    <interactant intactId="EBI-372265">
        <id>P21964</id>
        <label>COMT</label>
    </interactant>
    <organismsDiffer>false</organismsDiffer>
    <experiments>3</experiments>
</comment>
<comment type="interaction">
    <interactant intactId="EBI-310962">
        <id>Q9UPZ6</id>
    </interactant>
    <interactant intactId="EBI-11037623">
        <id>Q9NYP7</id>
        <label>ELOVL5</label>
    </interactant>
    <organismsDiffer>false</organismsDiffer>
    <experiments>3</experiments>
</comment>
<comment type="interaction">
    <interactant intactId="EBI-310962">
        <id>Q9UPZ6</id>
    </interactant>
    <interactant intactId="EBI-712073">
        <id>Q8NBJ4</id>
        <label>GOLM1</label>
    </interactant>
    <organismsDiffer>false</organismsDiffer>
    <experiments>3</experiments>
</comment>
<comment type="interaction">
    <interactant intactId="EBI-310962">
        <id>Q9UPZ6</id>
    </interactant>
    <interactant intactId="EBI-18053395">
        <id>Q7Z5P4</id>
        <label>HSD17B13</label>
    </interactant>
    <organismsDiffer>false</organismsDiffer>
    <experiments>3</experiments>
</comment>
<comment type="interaction">
    <interactant intactId="EBI-310962">
        <id>Q9UPZ6</id>
    </interactant>
    <interactant intactId="EBI-18268016">
        <id>Q86WI0</id>
        <label>LHFPL1</label>
    </interactant>
    <organismsDiffer>false</organismsDiffer>
    <experiments>3</experiments>
</comment>
<comment type="interaction">
    <interactant intactId="EBI-310962">
        <id>Q9UPZ6</id>
    </interactant>
    <interactant intactId="EBI-10329546">
        <id>Q9Y5Y7</id>
        <label>LYVE1</label>
    </interactant>
    <organismsDiffer>false</organismsDiffer>
    <experiments>3</experiments>
</comment>
<comment type="interaction">
    <interactant intactId="EBI-310962">
        <id>Q9UPZ6</id>
    </interactant>
    <interactant intactId="EBI-17247926">
        <id>Q9NY72</id>
        <label>SCN3B</label>
    </interactant>
    <organismsDiffer>false</organismsDiffer>
    <experiments>3</experiments>
</comment>
<comment type="interaction">
    <interactant intactId="EBI-310962">
        <id>Q9UPZ6</id>
    </interactant>
    <interactant intactId="EBI-2820477">
        <id>Q71RG4</id>
        <label>TMUB2</label>
    </interactant>
    <organismsDiffer>false</organismsDiffer>
    <experiments>3</experiments>
</comment>
<comment type="interaction">
    <interactant intactId="EBI-310962">
        <id>Q9UPZ6</id>
    </interactant>
    <interactant intactId="EBI-1055364">
        <id>Q3ZAQ7</id>
        <label>VMA21</label>
    </interactant>
    <organismsDiffer>false</organismsDiffer>
    <experiments>3</experiments>
</comment>
<comment type="subcellular location">
    <molecule>Thrombospondin type-1 domain-containing protein 7A</molecule>
    <subcellularLocation>
        <location evidence="5 6 7">Cell membrane</location>
        <topology evidence="5">Single-pass type I membrane protein</topology>
    </subcellularLocation>
    <subcellularLocation>
        <location evidence="1">Cell projection</location>
    </subcellularLocation>
    <text evidence="1">Detected on podocyte foot processes.</text>
</comment>
<comment type="subcellular location">
    <molecule>Thrombospondin type-1 domain-containing protein 7A, soluble form</molecule>
    <subcellularLocation>
        <location evidence="5">Secreted</location>
    </subcellularLocation>
    <text evidence="5">Proteolytic cleavage in the extracellular region generates a 210 kDa soluble form.</text>
</comment>
<comment type="tissue specificity">
    <text evidence="6">Detected on kidney podocytes along the glomerular capillary wall (at protein level).</text>
</comment>
<comment type="domain">
    <text evidence="9 10">Sequence analysis combined with the expression of constructs corresponding each to two or three adjacent TSP type-1 domains suggests the presence of 21 TSP type-1 domains; not all of these are detected by standard bioinformatic tools.</text>
</comment>
<comment type="PTM">
    <text evidence="5">Proteolytic cleavage in the extracellular region generates a 210 kDa soluble form.</text>
</comment>
<comment type="PTM">
    <text evidence="5 6 8">Extensively N-glycosylated.</text>
</comment>
<comment type="disease">
    <text evidence="6 8">Autoantibodies against THSD7A have been detected in serum and glomeruli from patients with idiopathic membranous nephropathy (PubMed:25394321). The majority of the autoantibodies react with the two most N-terminal TSP type-1 domains (PubMed:29555830).</text>
</comment>
<keyword id="KW-0002">3D-structure</keyword>
<keyword id="KW-0037">Angiogenesis</keyword>
<keyword id="KW-1003">Cell membrane</keyword>
<keyword id="KW-0966">Cell projection</keyword>
<keyword id="KW-0175">Coiled coil</keyword>
<keyword id="KW-0221">Differentiation</keyword>
<keyword id="KW-1015">Disulfide bond</keyword>
<keyword id="KW-0325">Glycoprotein</keyword>
<keyword id="KW-0472">Membrane</keyword>
<keyword id="KW-1267">Proteomics identification</keyword>
<keyword id="KW-1185">Reference proteome</keyword>
<keyword id="KW-0677">Repeat</keyword>
<keyword id="KW-0964">Secreted</keyword>
<keyword id="KW-0732">Signal</keyword>
<keyword id="KW-0812">Transmembrane</keyword>
<keyword id="KW-1133">Transmembrane helix</keyword>
<dbReference type="EMBL" id="AC004141">
    <property type="status" value="NOT_ANNOTATED_CDS"/>
    <property type="molecule type" value="Genomic_DNA"/>
</dbReference>
<dbReference type="EMBL" id="AC004160">
    <property type="status" value="NOT_ANNOTATED_CDS"/>
    <property type="molecule type" value="Genomic_DNA"/>
</dbReference>
<dbReference type="EMBL" id="AC004614">
    <property type="status" value="NOT_ANNOTATED_CDS"/>
    <property type="molecule type" value="Genomic_DNA"/>
</dbReference>
<dbReference type="EMBL" id="AC010908">
    <property type="status" value="NOT_ANNOTATED_CDS"/>
    <property type="molecule type" value="Genomic_DNA"/>
</dbReference>
<dbReference type="EMBL" id="AC073109">
    <property type="status" value="NOT_ANNOTATED_CDS"/>
    <property type="molecule type" value="Genomic_DNA"/>
</dbReference>
<dbReference type="EMBL" id="AK092252">
    <property type="status" value="NOT_ANNOTATED_CDS"/>
    <property type="molecule type" value="mRNA"/>
</dbReference>
<dbReference type="EMBL" id="AB023177">
    <property type="protein sequence ID" value="BAA76804.2"/>
    <property type="molecule type" value="mRNA"/>
</dbReference>
<dbReference type="CCDS" id="CCDS47543.1"/>
<dbReference type="RefSeq" id="NP_056019.1">
    <property type="nucleotide sequence ID" value="NM_015204.3"/>
</dbReference>
<dbReference type="PDB" id="8OXR">
    <property type="method" value="X-ray"/>
    <property type="resolution" value="2.30 A"/>
    <property type="chains" value="A=48-192"/>
</dbReference>
<dbReference type="PDBsum" id="8OXR"/>
<dbReference type="SMR" id="Q9UPZ6"/>
<dbReference type="BioGRID" id="128774">
    <property type="interactions" value="27"/>
</dbReference>
<dbReference type="FunCoup" id="Q9UPZ6">
    <property type="interactions" value="700"/>
</dbReference>
<dbReference type="IntAct" id="Q9UPZ6">
    <property type="interactions" value="18"/>
</dbReference>
<dbReference type="MINT" id="Q9UPZ6"/>
<dbReference type="STRING" id="9606.ENSP00000406482"/>
<dbReference type="CarbonylDB" id="Q9UPZ6"/>
<dbReference type="GlyCosmos" id="Q9UPZ6">
    <property type="glycosylation" value="14 sites, No reported glycans"/>
</dbReference>
<dbReference type="GlyGen" id="Q9UPZ6">
    <property type="glycosylation" value="15 sites, 23 N-linked glycans (5 sites), 1 O-linked glycan (1 site)"/>
</dbReference>
<dbReference type="iPTMnet" id="Q9UPZ6"/>
<dbReference type="PhosphoSitePlus" id="Q9UPZ6"/>
<dbReference type="SwissPalm" id="Q9UPZ6"/>
<dbReference type="BioMuta" id="THSD7A"/>
<dbReference type="DMDM" id="296453024"/>
<dbReference type="jPOST" id="Q9UPZ6"/>
<dbReference type="MassIVE" id="Q9UPZ6"/>
<dbReference type="PaxDb" id="9606-ENSP00000406482"/>
<dbReference type="PeptideAtlas" id="Q9UPZ6"/>
<dbReference type="ProteomicsDB" id="85479"/>
<dbReference type="Antibodypedia" id="626">
    <property type="antibodies" value="34 antibodies from 10 providers"/>
</dbReference>
<dbReference type="DNASU" id="221981"/>
<dbReference type="Ensembl" id="ENST00000423059.9">
    <property type="protein sequence ID" value="ENSP00000406482.2"/>
    <property type="gene ID" value="ENSG00000005108.17"/>
</dbReference>
<dbReference type="GeneID" id="221981"/>
<dbReference type="KEGG" id="hsa:221981"/>
<dbReference type="MANE-Select" id="ENST00000423059.9">
    <property type="protein sequence ID" value="ENSP00000406482.2"/>
    <property type="RefSeq nucleotide sequence ID" value="NM_015204.3"/>
    <property type="RefSeq protein sequence ID" value="NP_056019.1"/>
</dbReference>
<dbReference type="UCSC" id="uc064bok.1">
    <property type="organism name" value="human"/>
</dbReference>
<dbReference type="AGR" id="HGNC:22207"/>
<dbReference type="CTD" id="221981"/>
<dbReference type="DisGeNET" id="221981"/>
<dbReference type="GeneCards" id="THSD7A"/>
<dbReference type="HGNC" id="HGNC:22207">
    <property type="gene designation" value="THSD7A"/>
</dbReference>
<dbReference type="HPA" id="ENSG00000005108">
    <property type="expression patterns" value="Tissue enhanced (kidney)"/>
</dbReference>
<dbReference type="MIM" id="612249">
    <property type="type" value="gene"/>
</dbReference>
<dbReference type="neXtProt" id="NX_Q9UPZ6"/>
<dbReference type="OpenTargets" id="ENSG00000005108"/>
<dbReference type="PharmGKB" id="PA162405715"/>
<dbReference type="VEuPathDB" id="HostDB:ENSG00000005108"/>
<dbReference type="eggNOG" id="KOG3538">
    <property type="taxonomic scope" value="Eukaryota"/>
</dbReference>
<dbReference type="GeneTree" id="ENSGT00940000155427"/>
<dbReference type="HOGENOM" id="CLU_004819_0_0_1"/>
<dbReference type="InParanoid" id="Q9UPZ6"/>
<dbReference type="OMA" id="GRDCMDP"/>
<dbReference type="OrthoDB" id="5814848at2759"/>
<dbReference type="PAN-GO" id="Q9UPZ6">
    <property type="GO annotations" value="2 GO annotations based on evolutionary models"/>
</dbReference>
<dbReference type="PhylomeDB" id="Q9UPZ6"/>
<dbReference type="TreeFam" id="TF329791"/>
<dbReference type="PathwayCommons" id="Q9UPZ6"/>
<dbReference type="Reactome" id="R-HSA-5083635">
    <property type="pathway name" value="Defective B3GALTL causes PpS"/>
</dbReference>
<dbReference type="Reactome" id="R-HSA-5173214">
    <property type="pathway name" value="O-glycosylation of TSR domain-containing proteins"/>
</dbReference>
<dbReference type="SignaLink" id="Q9UPZ6"/>
<dbReference type="BioGRID-ORCS" id="221981">
    <property type="hits" value="11 hits in 1143 CRISPR screens"/>
</dbReference>
<dbReference type="ChiTaRS" id="THSD7A">
    <property type="organism name" value="human"/>
</dbReference>
<dbReference type="GenomeRNAi" id="221981"/>
<dbReference type="Pharos" id="Q9UPZ6">
    <property type="development level" value="Tbio"/>
</dbReference>
<dbReference type="PRO" id="PR:Q9UPZ6"/>
<dbReference type="Proteomes" id="UP000005640">
    <property type="component" value="Chromosome 7"/>
</dbReference>
<dbReference type="RNAct" id="Q9UPZ6">
    <property type="molecule type" value="protein"/>
</dbReference>
<dbReference type="Bgee" id="ENSG00000005108">
    <property type="expression patterns" value="Expressed in decidua and 183 other cell types or tissues"/>
</dbReference>
<dbReference type="ExpressionAtlas" id="Q9UPZ6">
    <property type="expression patterns" value="baseline and differential"/>
</dbReference>
<dbReference type="GO" id="GO:0042995">
    <property type="term" value="C:cell projection"/>
    <property type="evidence" value="ECO:0007669"/>
    <property type="project" value="UniProtKB-SubCell"/>
</dbReference>
<dbReference type="GO" id="GO:0005576">
    <property type="term" value="C:extracellular region"/>
    <property type="evidence" value="ECO:0007669"/>
    <property type="project" value="UniProtKB-SubCell"/>
</dbReference>
<dbReference type="GO" id="GO:0005886">
    <property type="term" value="C:plasma membrane"/>
    <property type="evidence" value="ECO:0000314"/>
    <property type="project" value="UniProtKB"/>
</dbReference>
<dbReference type="GO" id="GO:0030036">
    <property type="term" value="P:actin cytoskeleton organization"/>
    <property type="evidence" value="ECO:0000318"/>
    <property type="project" value="GO_Central"/>
</dbReference>
<dbReference type="GO" id="GO:0001525">
    <property type="term" value="P:angiogenesis"/>
    <property type="evidence" value="ECO:0007669"/>
    <property type="project" value="UniProtKB-KW"/>
</dbReference>
<dbReference type="GO" id="GO:0030154">
    <property type="term" value="P:cell differentiation"/>
    <property type="evidence" value="ECO:0007669"/>
    <property type="project" value="UniProtKB-KW"/>
</dbReference>
<dbReference type="FunFam" id="2.20.100.10:FF:000014">
    <property type="entry name" value="Thrombospondin type 1 domain containing 7A"/>
    <property type="match status" value="1"/>
</dbReference>
<dbReference type="FunFam" id="2.20.100.10:FF:000017">
    <property type="entry name" value="Thrombospondin type 1 domain containing 7A"/>
    <property type="match status" value="1"/>
</dbReference>
<dbReference type="FunFam" id="2.20.100.10:FF:000018">
    <property type="entry name" value="Thrombospondin type 1 domain containing 7A"/>
    <property type="match status" value="1"/>
</dbReference>
<dbReference type="FunFam" id="2.20.100.10:FF:000019">
    <property type="entry name" value="Thrombospondin type 1 domain containing 7A"/>
    <property type="match status" value="1"/>
</dbReference>
<dbReference type="FunFam" id="2.20.100.10:FF:000020">
    <property type="entry name" value="Thrombospondin type 1 domain containing 7A"/>
    <property type="match status" value="1"/>
</dbReference>
<dbReference type="FunFam" id="2.20.100.10:FF:000027">
    <property type="entry name" value="Thrombospondin type 1 domain containing 7A"/>
    <property type="match status" value="1"/>
</dbReference>
<dbReference type="FunFam" id="2.20.100.10:FF:000031">
    <property type="entry name" value="Thrombospondin type 1 domain containing 7A"/>
    <property type="match status" value="1"/>
</dbReference>
<dbReference type="FunFam" id="2.20.100.10:FF:000050">
    <property type="entry name" value="Thrombospondin type 1 domain containing 7B"/>
    <property type="match status" value="1"/>
</dbReference>
<dbReference type="FunFam" id="2.20.100.10:FF:000015">
    <property type="entry name" value="Thrombospondin, type I, domain containing 7A"/>
    <property type="match status" value="1"/>
</dbReference>
<dbReference type="Gene3D" id="2.20.100.10">
    <property type="entry name" value="Thrombospondin type-1 (TSP1) repeat"/>
    <property type="match status" value="12"/>
</dbReference>
<dbReference type="InterPro" id="IPR051418">
    <property type="entry name" value="Spondin/Thrombospondin_T1"/>
</dbReference>
<dbReference type="InterPro" id="IPR000884">
    <property type="entry name" value="TSP1_rpt"/>
</dbReference>
<dbReference type="InterPro" id="IPR036383">
    <property type="entry name" value="TSP1_rpt_sf"/>
</dbReference>
<dbReference type="InterPro" id="IPR044004">
    <property type="entry name" value="TSP1_spondin_dom"/>
</dbReference>
<dbReference type="InterPro" id="IPR056991">
    <property type="entry name" value="TSP1_TSH7A-B_C"/>
</dbReference>
<dbReference type="PANTHER" id="PTHR11311">
    <property type="entry name" value="SPONDIN"/>
    <property type="match status" value="1"/>
</dbReference>
<dbReference type="PANTHER" id="PTHR11311:SF8">
    <property type="entry name" value="THROMBOSPONDIN TYPE-1 DOMAIN-CONTAINING PROTEIN 7A"/>
    <property type="match status" value="1"/>
</dbReference>
<dbReference type="Pfam" id="PF19030">
    <property type="entry name" value="TSP1_ADAMTS"/>
    <property type="match status" value="2"/>
</dbReference>
<dbReference type="Pfam" id="PF19028">
    <property type="entry name" value="TSP1_spondin"/>
    <property type="match status" value="6"/>
</dbReference>
<dbReference type="Pfam" id="PF23308">
    <property type="entry name" value="TSP1_TSH7A-B_C"/>
    <property type="match status" value="1"/>
</dbReference>
<dbReference type="Pfam" id="PF00090">
    <property type="entry name" value="TSP_1"/>
    <property type="match status" value="4"/>
</dbReference>
<dbReference type="SMART" id="SM00209">
    <property type="entry name" value="TSP1"/>
    <property type="match status" value="16"/>
</dbReference>
<dbReference type="SUPFAM" id="SSF82895">
    <property type="entry name" value="TSP-1 type 1 repeat"/>
    <property type="match status" value="13"/>
</dbReference>
<dbReference type="PROSITE" id="PS50092">
    <property type="entry name" value="TSP1"/>
    <property type="match status" value="11"/>
</dbReference>
<reference key="1">
    <citation type="journal article" date="2003" name="Nature">
        <title>The DNA sequence of human chromosome 7.</title>
        <authorList>
            <person name="Hillier L.W."/>
            <person name="Fulton R.S."/>
            <person name="Fulton L.A."/>
            <person name="Graves T.A."/>
            <person name="Pepin K.H."/>
            <person name="Wagner-McPherson C."/>
            <person name="Layman D."/>
            <person name="Maas J."/>
            <person name="Jaeger S."/>
            <person name="Walker R."/>
            <person name="Wylie K."/>
            <person name="Sekhon M."/>
            <person name="Becker M.C."/>
            <person name="O'Laughlin M.D."/>
            <person name="Schaller M.E."/>
            <person name="Fewell G.A."/>
            <person name="Delehaunty K.D."/>
            <person name="Miner T.L."/>
            <person name="Nash W.E."/>
            <person name="Cordes M."/>
            <person name="Du H."/>
            <person name="Sun H."/>
            <person name="Edwards J."/>
            <person name="Bradshaw-Cordum H."/>
            <person name="Ali J."/>
            <person name="Andrews S."/>
            <person name="Isak A."/>
            <person name="Vanbrunt A."/>
            <person name="Nguyen C."/>
            <person name="Du F."/>
            <person name="Lamar B."/>
            <person name="Courtney L."/>
            <person name="Kalicki J."/>
            <person name="Ozersky P."/>
            <person name="Bielicki L."/>
            <person name="Scott K."/>
            <person name="Holmes A."/>
            <person name="Harkins R."/>
            <person name="Harris A."/>
            <person name="Strong C.M."/>
            <person name="Hou S."/>
            <person name="Tomlinson C."/>
            <person name="Dauphin-Kohlberg S."/>
            <person name="Kozlowicz-Reilly A."/>
            <person name="Leonard S."/>
            <person name="Rohlfing T."/>
            <person name="Rock S.M."/>
            <person name="Tin-Wollam A.-M."/>
            <person name="Abbott A."/>
            <person name="Minx P."/>
            <person name="Maupin R."/>
            <person name="Strowmatt C."/>
            <person name="Latreille P."/>
            <person name="Miller N."/>
            <person name="Johnson D."/>
            <person name="Murray J."/>
            <person name="Woessner J.P."/>
            <person name="Wendl M.C."/>
            <person name="Yang S.-P."/>
            <person name="Schultz B.R."/>
            <person name="Wallis J.W."/>
            <person name="Spieth J."/>
            <person name="Bieri T.A."/>
            <person name="Nelson J.O."/>
            <person name="Berkowicz N."/>
            <person name="Wohldmann P.E."/>
            <person name="Cook L.L."/>
            <person name="Hickenbotham M.T."/>
            <person name="Eldred J."/>
            <person name="Williams D."/>
            <person name="Bedell J.A."/>
            <person name="Mardis E.R."/>
            <person name="Clifton S.W."/>
            <person name="Chissoe S.L."/>
            <person name="Marra M.A."/>
            <person name="Raymond C."/>
            <person name="Haugen E."/>
            <person name="Gillett W."/>
            <person name="Zhou Y."/>
            <person name="James R."/>
            <person name="Phelps K."/>
            <person name="Iadanoto S."/>
            <person name="Bubb K."/>
            <person name="Simms E."/>
            <person name="Levy R."/>
            <person name="Clendenning J."/>
            <person name="Kaul R."/>
            <person name="Kent W.J."/>
            <person name="Furey T.S."/>
            <person name="Baertsch R.A."/>
            <person name="Brent M.R."/>
            <person name="Keibler E."/>
            <person name="Flicek P."/>
            <person name="Bork P."/>
            <person name="Suyama M."/>
            <person name="Bailey J.A."/>
            <person name="Portnoy M.E."/>
            <person name="Torrents D."/>
            <person name="Chinwalla A.T."/>
            <person name="Gish W.R."/>
            <person name="Eddy S.R."/>
            <person name="McPherson J.D."/>
            <person name="Olson M.V."/>
            <person name="Eichler E.E."/>
            <person name="Green E.D."/>
            <person name="Waterston R.H."/>
            <person name="Wilson R.K."/>
        </authorList>
    </citation>
    <scope>NUCLEOTIDE SEQUENCE [LARGE SCALE GENOMIC DNA]</scope>
</reference>
<reference key="2">
    <citation type="journal article" date="2004" name="Nat. Genet.">
        <title>Complete sequencing and characterization of 21,243 full-length human cDNAs.</title>
        <authorList>
            <person name="Ota T."/>
            <person name="Suzuki Y."/>
            <person name="Nishikawa T."/>
            <person name="Otsuki T."/>
            <person name="Sugiyama T."/>
            <person name="Irie R."/>
            <person name="Wakamatsu A."/>
            <person name="Hayashi K."/>
            <person name="Sato H."/>
            <person name="Nagai K."/>
            <person name="Kimura K."/>
            <person name="Makita H."/>
            <person name="Sekine M."/>
            <person name="Obayashi M."/>
            <person name="Nishi T."/>
            <person name="Shibahara T."/>
            <person name="Tanaka T."/>
            <person name="Ishii S."/>
            <person name="Yamamoto J."/>
            <person name="Saito K."/>
            <person name="Kawai Y."/>
            <person name="Isono Y."/>
            <person name="Nakamura Y."/>
            <person name="Nagahari K."/>
            <person name="Murakami K."/>
            <person name="Yasuda T."/>
            <person name="Iwayanagi T."/>
            <person name="Wagatsuma M."/>
            <person name="Shiratori A."/>
            <person name="Sudo H."/>
            <person name="Hosoiri T."/>
            <person name="Kaku Y."/>
            <person name="Kodaira H."/>
            <person name="Kondo H."/>
            <person name="Sugawara M."/>
            <person name="Takahashi M."/>
            <person name="Kanda K."/>
            <person name="Yokoi T."/>
            <person name="Furuya T."/>
            <person name="Kikkawa E."/>
            <person name="Omura Y."/>
            <person name="Abe K."/>
            <person name="Kamihara K."/>
            <person name="Katsuta N."/>
            <person name="Sato K."/>
            <person name="Tanikawa M."/>
            <person name="Yamazaki M."/>
            <person name="Ninomiya K."/>
            <person name="Ishibashi T."/>
            <person name="Yamashita H."/>
            <person name="Murakawa K."/>
            <person name="Fujimori K."/>
            <person name="Tanai H."/>
            <person name="Kimata M."/>
            <person name="Watanabe M."/>
            <person name="Hiraoka S."/>
            <person name="Chiba Y."/>
            <person name="Ishida S."/>
            <person name="Ono Y."/>
            <person name="Takiguchi S."/>
            <person name="Watanabe S."/>
            <person name="Yosida M."/>
            <person name="Hotuta T."/>
            <person name="Kusano J."/>
            <person name="Kanehori K."/>
            <person name="Takahashi-Fujii A."/>
            <person name="Hara H."/>
            <person name="Tanase T.-O."/>
            <person name="Nomura Y."/>
            <person name="Togiya S."/>
            <person name="Komai F."/>
            <person name="Hara R."/>
            <person name="Takeuchi K."/>
            <person name="Arita M."/>
            <person name="Imose N."/>
            <person name="Musashino K."/>
            <person name="Yuuki H."/>
            <person name="Oshima A."/>
            <person name="Sasaki N."/>
            <person name="Aotsuka S."/>
            <person name="Yoshikawa Y."/>
            <person name="Matsunawa H."/>
            <person name="Ichihara T."/>
            <person name="Shiohata N."/>
            <person name="Sano S."/>
            <person name="Moriya S."/>
            <person name="Momiyama H."/>
            <person name="Satoh N."/>
            <person name="Takami S."/>
            <person name="Terashima Y."/>
            <person name="Suzuki O."/>
            <person name="Nakagawa S."/>
            <person name="Senoh A."/>
            <person name="Mizoguchi H."/>
            <person name="Goto Y."/>
            <person name="Shimizu F."/>
            <person name="Wakebe H."/>
            <person name="Hishigaki H."/>
            <person name="Watanabe T."/>
            <person name="Sugiyama A."/>
            <person name="Takemoto M."/>
            <person name="Kawakami B."/>
            <person name="Yamazaki M."/>
            <person name="Watanabe K."/>
            <person name="Kumagai A."/>
            <person name="Itakura S."/>
            <person name="Fukuzumi Y."/>
            <person name="Fujimori Y."/>
            <person name="Komiyama M."/>
            <person name="Tashiro H."/>
            <person name="Tanigami A."/>
            <person name="Fujiwara T."/>
            <person name="Ono T."/>
            <person name="Yamada K."/>
            <person name="Fujii Y."/>
            <person name="Ozaki K."/>
            <person name="Hirao M."/>
            <person name="Ohmori Y."/>
            <person name="Kawabata A."/>
            <person name="Hikiji T."/>
            <person name="Kobatake N."/>
            <person name="Inagaki H."/>
            <person name="Ikema Y."/>
            <person name="Okamoto S."/>
            <person name="Okitani R."/>
            <person name="Kawakami T."/>
            <person name="Noguchi S."/>
            <person name="Itoh T."/>
            <person name="Shigeta K."/>
            <person name="Senba T."/>
            <person name="Matsumura K."/>
            <person name="Nakajima Y."/>
            <person name="Mizuno T."/>
            <person name="Morinaga M."/>
            <person name="Sasaki M."/>
            <person name="Togashi T."/>
            <person name="Oyama M."/>
            <person name="Hata H."/>
            <person name="Watanabe M."/>
            <person name="Komatsu T."/>
            <person name="Mizushima-Sugano J."/>
            <person name="Satoh T."/>
            <person name="Shirai Y."/>
            <person name="Takahashi Y."/>
            <person name="Nakagawa K."/>
            <person name="Okumura K."/>
            <person name="Nagase T."/>
            <person name="Nomura N."/>
            <person name="Kikuchi H."/>
            <person name="Masuho Y."/>
            <person name="Yamashita R."/>
            <person name="Nakai K."/>
            <person name="Yada T."/>
            <person name="Nakamura Y."/>
            <person name="Ohara O."/>
            <person name="Isogai T."/>
            <person name="Sugano S."/>
        </authorList>
    </citation>
    <scope>NUCLEOTIDE SEQUENCE [LARGE SCALE MRNA] OF 1-933</scope>
</reference>
<reference key="3">
    <citation type="journal article" date="1999" name="DNA Res.">
        <title>Prediction of the coding sequences of unidentified human genes. XIII. The complete sequences of 100 new cDNA clones from brain which code for large proteins in vitro.</title>
        <authorList>
            <person name="Nagase T."/>
            <person name="Ishikawa K."/>
            <person name="Suyama M."/>
            <person name="Kikuno R."/>
            <person name="Hirosawa M."/>
            <person name="Miyajima N."/>
            <person name="Tanaka A."/>
            <person name="Kotani H."/>
            <person name="Nomura N."/>
            <person name="Ohara O."/>
        </authorList>
    </citation>
    <scope>NUCLEOTIDE SEQUENCE [LARGE SCALE MRNA] OF 156-1657</scope>
    <source>
        <tissue>Brain</tissue>
    </source>
</reference>
<reference key="4">
    <citation type="journal article" date="2002" name="DNA Res.">
        <title>Construction of expression-ready cDNA clones for KIAA genes: manual curation of 330 KIAA cDNA clones.</title>
        <authorList>
            <person name="Nakajima D."/>
            <person name="Okazaki N."/>
            <person name="Yamakawa H."/>
            <person name="Kikuno R."/>
            <person name="Ohara O."/>
            <person name="Nagase T."/>
        </authorList>
    </citation>
    <scope>SEQUENCE REVISION</scope>
</reference>
<reference key="5">
    <citation type="journal article" date="2014" name="N. Engl. J. Med.">
        <title>Thrombospondin type-1 domain-containing 7A in idiopathic membranous nephropathy.</title>
        <authorList>
            <person name="Tomas N.M."/>
            <person name="Beck L.H. Jr."/>
            <person name="Meyer-Schwesinger C."/>
            <person name="Seitz-Polski B."/>
            <person name="Ma H."/>
            <person name="Zahner G."/>
            <person name="Dolla G."/>
            <person name="Hoxha E."/>
            <person name="Helmchen U."/>
            <person name="Dabert-Gay A.S."/>
            <person name="Debayle D."/>
            <person name="Merchant M."/>
            <person name="Klein J."/>
            <person name="Salant D.J."/>
            <person name="Stahl R.A.K."/>
            <person name="Lambeau G."/>
        </authorList>
    </citation>
    <scope>DISEASE</scope>
    <scope>IDENTIFICATION BY MASS SPECTROMETRY</scope>
    <scope>SUBCELLULAR LOCATION</scope>
    <scope>TISSUE SPECIFICITY</scope>
    <scope>GLYCOSYLATION</scope>
</reference>
<reference key="6">
    <citation type="journal article" date="2011" name="PLoS ONE">
        <title>Soluble THSD7A is an N-glycoprotein that promotes endothelial cell migration and tube formation in angiogenesis.</title>
        <authorList>
            <person name="Kuo M.W."/>
            <person name="Wang C.H."/>
            <person name="Wu H.C."/>
            <person name="Chang S.J."/>
            <person name="Chuang Y.J."/>
        </authorList>
    </citation>
    <scope>FUNCTION (THROMBOSPONDIN TYPE-1 DOMAIN-CONTAINING PROTEIN 7A</scope>
    <scope>SOLUBLE FORM)</scope>
    <scope>PROTEOLYTIC CLEAVAGE</scope>
    <scope>GLYCOSYLATION</scope>
    <scope>SUBCELLULAR LOCATION</scope>
</reference>
<reference key="7">
    <citation type="journal article" date="2016" name="J. Clin. Invest.">
        <title>Autoantibodies against thrombospondin type 1 domain-containing 7A induce membranous nephropathy.</title>
        <authorList>
            <person name="Tomas N.M."/>
            <person name="Hoxha E."/>
            <person name="Reinicke A.T."/>
            <person name="Fester L."/>
            <person name="Helmchen U."/>
            <person name="Gerth J."/>
            <person name="Bachmann F."/>
            <person name="Budde K."/>
            <person name="Koch-Nolte F."/>
            <person name="Zahner G."/>
            <person name="Rune G."/>
            <person name="Lambeau G."/>
            <person name="Meyer-Schwesinger C."/>
            <person name="Stahl R.A."/>
        </authorList>
    </citation>
    <scope>FUNCTION (THROMBOSPONDIN TYPE-1 DOMAIN-CONTAINING PROTEIN 7A)</scope>
    <scope>SUBCELLULAR LOCATION</scope>
</reference>
<reference key="8">
    <citation type="journal article" date="2018" name="J. Am. Soc. Nephrol.">
        <title>The Most N-Terminal Region of THSD7A Is the Predominant Target for Autoimmunity in THSD7A-Associated Membranous Nephropathy.</title>
        <authorList>
            <person name="Seifert L."/>
            <person name="Hoxha E."/>
            <person name="Eichhoff A.M."/>
            <person name="Zahner G."/>
            <person name="Dehde S."/>
            <person name="Reinhard L."/>
            <person name="Koch-Nolte F."/>
            <person name="Stahl R.A.K."/>
            <person name="Tomas N.M."/>
        </authorList>
    </citation>
    <scope>DOMAIN</scope>
    <scope>DISEASE</scope>
    <scope>GLYCOSYLATION</scope>
</reference>
<reference key="9">
    <citation type="journal article" date="2019" name="Proteins">
        <title>Structure and function insights garnered from in silico modeling of the thrombospondin type-1 domain-containing 7A antigen.</title>
        <authorList>
            <person name="Stoddard S.V."/>
            <person name="Welsh C.L."/>
            <person name="Palopoli M.M."/>
            <person name="Stoddard S.D."/>
            <person name="Aramandla M.P."/>
            <person name="Patel R.M."/>
            <person name="Ma H."/>
            <person name="Beck L.H. Jr."/>
        </authorList>
    </citation>
    <scope>ANALYSIS OF TSP TYPE-1 DOMAINS</scope>
</reference>
<gene>
    <name type="primary">THSD7A</name>
    <name type="synonym">KIAA0960</name>
</gene>
<organism>
    <name type="scientific">Homo sapiens</name>
    <name type="common">Human</name>
    <dbReference type="NCBI Taxonomy" id="9606"/>
    <lineage>
        <taxon>Eukaryota</taxon>
        <taxon>Metazoa</taxon>
        <taxon>Chordata</taxon>
        <taxon>Craniata</taxon>
        <taxon>Vertebrata</taxon>
        <taxon>Euteleostomi</taxon>
        <taxon>Mammalia</taxon>
        <taxon>Eutheria</taxon>
        <taxon>Euarchontoglires</taxon>
        <taxon>Primates</taxon>
        <taxon>Haplorrhini</taxon>
        <taxon>Catarrhini</taxon>
        <taxon>Hominidae</taxon>
        <taxon>Homo</taxon>
    </lineage>
</organism>
<proteinExistence type="evidence at protein level"/>
<protein>
    <recommendedName>
        <fullName>Thrombospondin type-1 domain-containing protein 7A</fullName>
    </recommendedName>
    <component>
        <recommendedName>
            <fullName>Thrombospondin type-1 domain-containing protein 7A, soluble form</fullName>
        </recommendedName>
    </component>
</protein>
<evidence type="ECO:0000250" key="1">
    <source>
        <dbReference type="UniProtKB" id="Q69ZU6"/>
    </source>
</evidence>
<evidence type="ECO:0000255" key="2"/>
<evidence type="ECO:0000255" key="3">
    <source>
        <dbReference type="PROSITE-ProRule" id="PRU00210"/>
    </source>
</evidence>
<evidence type="ECO:0000256" key="4">
    <source>
        <dbReference type="SAM" id="MobiDB-lite"/>
    </source>
</evidence>
<evidence type="ECO:0000269" key="5">
    <source>
    </source>
</evidence>
<evidence type="ECO:0000269" key="6">
    <source>
    </source>
</evidence>
<evidence type="ECO:0000269" key="7">
    <source>
    </source>
</evidence>
<evidence type="ECO:0000269" key="8">
    <source>
    </source>
</evidence>
<evidence type="ECO:0000303" key="9">
    <source>
    </source>
</evidence>
<evidence type="ECO:0000303" key="10">
    <source>
    </source>
</evidence>
<evidence type="ECO:0000305" key="11"/>
<evidence type="ECO:0007829" key="12">
    <source>
        <dbReference type="PDB" id="8OXR"/>
    </source>
</evidence>
<feature type="signal peptide" evidence="2">
    <location>
        <begin position="1"/>
        <end position="47"/>
    </location>
</feature>
<feature type="chain" id="PRO_0000256126" description="Thrombospondin type-1 domain-containing protein 7A">
    <location>
        <begin position="48"/>
        <end position="1657"/>
    </location>
</feature>
<feature type="chain" id="PRO_0000444430" description="Thrombospondin type-1 domain-containing protein 7A, soluble form">
    <location>
        <begin position="48"/>
        <end status="unknown"/>
    </location>
</feature>
<feature type="topological domain" description="Extracellular" evidence="2">
    <location>
        <begin position="48"/>
        <end position="1607"/>
    </location>
</feature>
<feature type="transmembrane region" description="Helical" evidence="2">
    <location>
        <begin position="1608"/>
        <end position="1628"/>
    </location>
</feature>
<feature type="topological domain" description="Cytoplasmic" evidence="2">
    <location>
        <begin position="1629"/>
        <end position="1657"/>
    </location>
</feature>
<feature type="domain" description="TSP type-1 1" evidence="3">
    <location>
        <begin position="57"/>
        <end position="116"/>
    </location>
</feature>
<feature type="domain" description="TSP type-1 2" evidence="2">
    <location>
        <begin position="120"/>
        <end position="192"/>
    </location>
</feature>
<feature type="domain" description="TSP type-1 3" evidence="3">
    <location>
        <begin position="194"/>
        <end position="247"/>
    </location>
</feature>
<feature type="domain" description="TSP type-1 4" evidence="3">
    <location>
        <begin position="360"/>
        <end position="416"/>
    </location>
</feature>
<feature type="domain" description="TSP type-1 5" evidence="3">
    <location>
        <begin position="423"/>
        <end position="510"/>
    </location>
</feature>
<feature type="domain" description="TSP type-1 6" evidence="3">
    <location>
        <begin position="512"/>
        <end position="574"/>
    </location>
</feature>
<feature type="domain" description="TSP type-1 7" evidence="3">
    <location>
        <begin position="634"/>
        <end position="695"/>
    </location>
</feature>
<feature type="domain" description="TSP type-1 8" evidence="3">
    <location>
        <begin position="696"/>
        <end position="769"/>
    </location>
</feature>
<feature type="domain" description="TSP type-1 9" evidence="3">
    <location>
        <begin position="771"/>
        <end position="831"/>
    </location>
</feature>
<feature type="domain" description="TSP type-1 10" evidence="2">
    <location>
        <begin position="832"/>
        <end position="904"/>
    </location>
</feature>
<feature type="domain" description="TSP type-1 11" evidence="3">
    <location>
        <begin position="906"/>
        <end position="959"/>
    </location>
</feature>
<feature type="domain" description="TSP type-1 12" evidence="3">
    <location>
        <begin position="960"/>
        <end position="1033"/>
    </location>
</feature>
<feature type="domain" description="TSP type-1 13" evidence="3">
    <location>
        <begin position="1035"/>
        <end position="1095"/>
    </location>
</feature>
<feature type="domain" description="TSP type-1 14" evidence="2">
    <location>
        <begin position="1096"/>
        <end position="1163"/>
    </location>
</feature>
<feature type="domain" description="TSP type-1 15" evidence="2">
    <location>
        <begin position="1166"/>
        <end position="1220"/>
    </location>
</feature>
<feature type="domain" description="TSP type-1 16" evidence="3">
    <location>
        <begin position="1221"/>
        <end position="1284"/>
    </location>
</feature>
<feature type="domain" description="TSP type-1 17" evidence="3">
    <location>
        <begin position="1286"/>
        <end position="1341"/>
    </location>
</feature>
<feature type="domain" description="TSP type-1 18" evidence="3">
    <location>
        <begin position="1342"/>
        <end position="1412"/>
    </location>
</feature>
<feature type="domain" description="TSP type-1 19" evidence="3">
    <location>
        <begin position="1414"/>
        <end position="1475"/>
    </location>
</feature>
<feature type="region of interest" description="Disordered" evidence="4">
    <location>
        <begin position="265"/>
        <end position="311"/>
    </location>
</feature>
<feature type="region of interest" description="Disordered" evidence="4">
    <location>
        <begin position="1570"/>
        <end position="1591"/>
    </location>
</feature>
<feature type="coiled-coil region" evidence="2">
    <location>
        <begin position="267"/>
        <end position="315"/>
    </location>
</feature>
<feature type="compositionally biased region" description="Basic residues" evidence="4">
    <location>
        <begin position="269"/>
        <end position="280"/>
    </location>
</feature>
<feature type="compositionally biased region" description="Basic and acidic residues" evidence="4">
    <location>
        <begin position="281"/>
        <end position="299"/>
    </location>
</feature>
<feature type="compositionally biased region" description="Basic residues" evidence="4">
    <location>
        <begin position="300"/>
        <end position="309"/>
    </location>
</feature>
<feature type="glycosylation site" description="N-linked (GlcNAc...) asparagine" evidence="2">
    <location>
        <position position="234"/>
    </location>
</feature>
<feature type="glycosylation site" description="N-linked (GlcNAc...) asparagine" evidence="2">
    <location>
        <position position="332"/>
    </location>
</feature>
<feature type="glycosylation site" description="N-linked (GlcNAc...) asparagine" evidence="2">
    <location>
        <position position="450"/>
    </location>
</feature>
<feature type="glycosylation site" description="N-linked (GlcNAc...) asparagine" evidence="2">
    <location>
        <position position="500"/>
    </location>
</feature>
<feature type="glycosylation site" description="N-linked (GlcNAc...) asparagine" evidence="2">
    <location>
        <position position="679"/>
    </location>
</feature>
<feature type="glycosylation site" description="N-linked (GlcNAc...) asparagine" evidence="2">
    <location>
        <position position="717"/>
    </location>
</feature>
<feature type="glycosylation site" description="N-linked (GlcNAc...) asparagine" evidence="2">
    <location>
        <position position="968"/>
    </location>
</feature>
<feature type="glycosylation site" description="N-linked (GlcNAc...) asparagine" evidence="2">
    <location>
        <position position="1043"/>
    </location>
</feature>
<feature type="glycosylation site" description="N-linked (GlcNAc...) asparagine" evidence="2">
    <location>
        <position position="1182"/>
    </location>
</feature>
<feature type="glycosylation site" description="N-linked (GlcNAc...) asparagine" evidence="2">
    <location>
        <position position="1225"/>
    </location>
</feature>
<feature type="glycosylation site" description="N-linked (GlcNAc...) asparagine" evidence="2">
    <location>
        <position position="1276"/>
    </location>
</feature>
<feature type="glycosylation site" description="N-linked (GlcNAc...) asparagine" evidence="2">
    <location>
        <position position="1366"/>
    </location>
</feature>
<feature type="glycosylation site" description="N-linked (GlcNAc...) asparagine" evidence="2">
    <location>
        <position position="1500"/>
    </location>
</feature>
<feature type="glycosylation site" description="N-linked (GlcNAc...) asparagine" evidence="2">
    <location>
        <position position="1547"/>
    </location>
</feature>
<feature type="disulfide bond" evidence="3">
    <location>
        <begin position="435"/>
        <end position="505"/>
    </location>
</feature>
<feature type="disulfide bond" evidence="3">
    <location>
        <begin position="455"/>
        <end position="509"/>
    </location>
</feature>
<feature type="disulfide bond" evidence="3">
    <location>
        <begin position="466"/>
        <end position="494"/>
    </location>
</feature>
<feature type="disulfide bond" evidence="3">
    <location>
        <begin position="635"/>
        <end position="677"/>
    </location>
</feature>
<feature type="disulfide bond" evidence="3">
    <location>
        <begin position="646"/>
        <end position="650"/>
    </location>
</feature>
<feature type="disulfide bond" evidence="3">
    <location>
        <begin position="689"/>
        <end position="694"/>
    </location>
</feature>
<feature type="disulfide bond" evidence="3">
    <location>
        <begin position="707"/>
        <end position="764"/>
    </location>
</feature>
<feature type="disulfide bond" evidence="3">
    <location>
        <begin position="728"/>
        <end position="768"/>
    </location>
</feature>
<feature type="disulfide bond" evidence="3">
    <location>
        <begin position="739"/>
        <end position="752"/>
    </location>
</feature>
<feature type="disulfide bond" evidence="3">
    <location>
        <begin position="772"/>
        <end position="814"/>
    </location>
</feature>
<feature type="disulfide bond" evidence="3">
    <location>
        <begin position="783"/>
        <end position="787"/>
    </location>
</feature>
<feature type="disulfide bond" evidence="3">
    <location>
        <begin position="824"/>
        <end position="830"/>
    </location>
</feature>
<feature type="disulfide bond" evidence="3">
    <location>
        <begin position="972"/>
        <end position="1028"/>
    </location>
</feature>
<feature type="disulfide bond" evidence="3">
    <location>
        <begin position="994"/>
        <end position="1032"/>
    </location>
</feature>
<feature type="disulfide bond" evidence="3">
    <location>
        <begin position="1005"/>
        <end position="1018"/>
    </location>
</feature>
<feature type="disulfide bond" evidence="3">
    <location>
        <begin position="1036"/>
        <end position="1073"/>
    </location>
</feature>
<feature type="disulfide bond" evidence="3">
    <location>
        <begin position="1047"/>
        <end position="1051"/>
    </location>
</feature>
<feature type="disulfide bond" evidence="3">
    <location>
        <begin position="1090"/>
        <end position="1094"/>
    </location>
</feature>
<feature type="disulfide bond" evidence="3">
    <location>
        <begin position="1213"/>
        <end position="1219"/>
    </location>
</feature>
<feature type="disulfide bond" evidence="3">
    <location>
        <begin position="1232"/>
        <end position="1279"/>
    </location>
</feature>
<feature type="disulfide bond" evidence="3">
    <location>
        <begin position="1240"/>
        <end position="1283"/>
    </location>
</feature>
<feature type="disulfide bond" evidence="3">
    <location>
        <begin position="1251"/>
        <end position="1264"/>
    </location>
</feature>
<feature type="disulfide bond" evidence="3">
    <location>
        <begin position="1287"/>
        <end position="1325"/>
    </location>
</feature>
<feature type="disulfide bond" evidence="3">
    <location>
        <begin position="1298"/>
        <end position="1302"/>
    </location>
</feature>
<feature type="disulfide bond" evidence="3">
    <location>
        <begin position="1335"/>
        <end position="1340"/>
    </location>
</feature>
<feature type="disulfide bond" evidence="3">
    <location>
        <begin position="1351"/>
        <end position="1407"/>
    </location>
</feature>
<feature type="disulfide bond" evidence="3">
    <location>
        <begin position="1358"/>
        <end position="1411"/>
    </location>
</feature>
<feature type="disulfide bond" evidence="3">
    <location>
        <begin position="1369"/>
        <end position="1388"/>
    </location>
</feature>
<feature type="disulfide bond" evidence="3">
    <location>
        <begin position="1415"/>
        <end position="1459"/>
    </location>
</feature>
<feature type="disulfide bond" evidence="3">
    <location>
        <begin position="1426"/>
        <end position="1430"/>
    </location>
</feature>
<feature type="disulfide bond" evidence="3">
    <location>
        <begin position="1469"/>
        <end position="1474"/>
    </location>
</feature>
<feature type="sequence variant" id="VAR_057366" description="In dbSNP:rs2074599.">
    <original>F</original>
    <variation>L</variation>
    <location>
        <position position="238"/>
    </location>
</feature>
<feature type="sequence variant" id="VAR_068676" description="In dbSNP:rs47.">
    <original>N</original>
    <variation>H</variation>
    <location>
        <position position="583"/>
    </location>
</feature>
<feature type="sequence variant" id="VAR_057367" description="In dbSNP:rs2285744.">
    <original>D</original>
    <variation>E</variation>
    <location>
        <position position="771"/>
    </location>
</feature>
<feature type="sequence variant" id="VAR_068677" description="In dbSNP:rs1432.">
    <original>D</original>
    <variation>E</variation>
    <location>
        <position position="906"/>
    </location>
</feature>
<feature type="sequence variant" id="VAR_068678" description="In dbSNP:rs56264449.">
    <original>D</original>
    <variation>E</variation>
    <location>
        <position position="1652"/>
    </location>
</feature>
<feature type="sequence conflict" description="In Ref. 2; AK092252." evidence="11" ref="2">
    <original>Q</original>
    <variation>R</variation>
    <location>
        <position position="131"/>
    </location>
</feature>
<feature type="sequence conflict" description="In Ref. 3; BAA76804." evidence="11" ref="3">
    <original>N</original>
    <variation>D</variation>
    <location>
        <position position="583"/>
    </location>
</feature>
<feature type="strand" evidence="12">
    <location>
        <begin position="59"/>
        <end position="63"/>
    </location>
</feature>
<feature type="strand" evidence="12">
    <location>
        <begin position="72"/>
        <end position="81"/>
    </location>
</feature>
<feature type="strand" evidence="12">
    <location>
        <begin position="84"/>
        <end position="88"/>
    </location>
</feature>
<feature type="helix" evidence="12">
    <location>
        <begin position="96"/>
        <end position="98"/>
    </location>
</feature>
<feature type="helix" evidence="12">
    <location>
        <begin position="101"/>
        <end position="103"/>
    </location>
</feature>
<feature type="strand" evidence="12">
    <location>
        <begin position="107"/>
        <end position="113"/>
    </location>
</feature>
<feature type="helix" evidence="12">
    <location>
        <begin position="116"/>
        <end position="118"/>
    </location>
</feature>
<feature type="turn" evidence="12">
    <location>
        <begin position="119"/>
        <end position="121"/>
    </location>
</feature>
<feature type="strand" evidence="12">
    <location>
        <begin position="122"/>
        <end position="126"/>
    </location>
</feature>
<feature type="strand" evidence="12">
    <location>
        <begin position="150"/>
        <end position="155"/>
    </location>
</feature>
<feature type="strand" evidence="12">
    <location>
        <begin position="158"/>
        <end position="162"/>
    </location>
</feature>
<feature type="turn" evidence="12">
    <location>
        <begin position="163"/>
        <end position="166"/>
    </location>
</feature>
<feature type="strand" evidence="12">
    <location>
        <begin position="167"/>
        <end position="169"/>
    </location>
</feature>
<feature type="helix" evidence="12">
    <location>
        <begin position="171"/>
        <end position="177"/>
    </location>
</feature>
<feature type="strand" evidence="12">
    <location>
        <begin position="183"/>
        <end position="189"/>
    </location>
</feature>
<accession>Q9UPZ6</accession>